<evidence type="ECO:0000255" key="1">
    <source>
        <dbReference type="HAMAP-Rule" id="MF_04083"/>
    </source>
</evidence>
<evidence type="ECO:0000256" key="2">
    <source>
        <dbReference type="SAM" id="MobiDB-lite"/>
    </source>
</evidence>
<evidence type="ECO:0007829" key="3">
    <source>
        <dbReference type="PDB" id="5U3O"/>
    </source>
</evidence>
<keyword id="KW-0002">3D-structure</keyword>
<keyword id="KW-0014">AIDS</keyword>
<keyword id="KW-0053">Apoptosis</keyword>
<keyword id="KW-1165">Clathrin-mediated endocytosis of virus by host</keyword>
<keyword id="KW-0165">Cleavage on pair of basic residues</keyword>
<keyword id="KW-0175">Coiled coil</keyword>
<keyword id="KW-1015">Disulfide bond</keyword>
<keyword id="KW-1170">Fusion of virus membrane with host endosomal membrane</keyword>
<keyword id="KW-1168">Fusion of virus membrane with host membrane</keyword>
<keyword id="KW-0325">Glycoprotein</keyword>
<keyword id="KW-1032">Host cell membrane</keyword>
<keyword id="KW-1039">Host endosome</keyword>
<keyword id="KW-1043">Host membrane</keyword>
<keyword id="KW-0945">Host-virus interaction</keyword>
<keyword id="KW-0449">Lipoprotein</keyword>
<keyword id="KW-0472">Membrane</keyword>
<keyword id="KW-0564">Palmitate</keyword>
<keyword id="KW-1185">Reference proteome</keyword>
<keyword id="KW-0732">Signal</keyword>
<keyword id="KW-0812">Transmembrane</keyword>
<keyword id="KW-1133">Transmembrane helix</keyword>
<keyword id="KW-1161">Viral attachment to host cell</keyword>
<keyword id="KW-0261">Viral envelope protein</keyword>
<keyword id="KW-0899">Viral immunoevasion</keyword>
<keyword id="KW-1162">Viral penetration into host cytoplasm</keyword>
<keyword id="KW-0946">Virion</keyword>
<keyword id="KW-1164">Virus endocytosis by host</keyword>
<keyword id="KW-1160">Virus entry into host cell</keyword>
<accession>Q73372</accession>
<proteinExistence type="evidence at protein level"/>
<reference key="1">
    <citation type="journal article" date="1992" name="J. Virol.">
        <title>An infectious molecular clone of an unusual macrophage-tropic and highly cytopathic strain of human immunodeficiency virus type 1.</title>
        <authorList>
            <person name="Collman R."/>
            <person name="Balliet J.W."/>
            <person name="Gregory S.A."/>
            <person name="Friedman H."/>
            <person name="Kolson D.L."/>
            <person name="Nathanson N."/>
            <person name="Srinivasan A."/>
        </authorList>
    </citation>
    <scope>NUCLEOTIDE SEQUENCE [GENOMIC DNA]</scope>
</reference>
<protein>
    <recommendedName>
        <fullName evidence="1">Envelope glycoprotein gp160</fullName>
    </recommendedName>
    <alternativeName>
        <fullName evidence="1">Env polyprotein</fullName>
    </alternativeName>
    <component>
        <recommendedName>
            <fullName evidence="1">Surface protein gp120</fullName>
            <shortName evidence="1">SU</shortName>
        </recommendedName>
        <alternativeName>
            <fullName evidence="1">Glycoprotein 120</fullName>
            <shortName evidence="1">gp120</shortName>
        </alternativeName>
    </component>
    <component>
        <recommendedName>
            <fullName evidence="1">Transmembrane protein gp41</fullName>
            <shortName evidence="1">TM</shortName>
        </recommendedName>
        <alternativeName>
            <fullName evidence="1">Glycoprotein 41</fullName>
            <shortName evidence="1">gp41</shortName>
        </alternativeName>
    </component>
</protein>
<sequence length="853" mass="96944">MRVKEIRKNWQHLRGGILLLGMLMICSAAKEKTWVTIYYGVPVWREATTTLFCASDAKAYDTEVHNVWATHACVPTDPNPQEVVLGNVTENFNMWKNNMVDQMHEDIISLWDESLKPCVKLTPLCVTLNCTNLNITKNTTNPTSSSWGMMEKGEIKNCSFYITTSIRNKVKKEYALFNRLDVVPIENTNNTKYRLISCNTSVITQACPKVSFQPIPIHYCVPAGFAMLKCNNKTFNGSGPCTNVSTVQCTHGIRPVVSTQLLLNGSLAEEDIVIRSENFTDNAKTIIVQLNESVVINCTRPNNNTRRRLSIGPGRAFYARRNIIGDIRQAHCNISRAKWNNTLQQIVIKLREKFRNKTIAFNQSSGGDPEIVMHSFNCGGEFFYCNTAQLFNSTWNVTGGTNGTEGNDIITLQCRIKQIINMWQKVGKAMYAPPITGQIRCSSNITGLLLTRDGGNSTETETEIFRPGGGDMRDNWRSELYKYKVVRIEPIGVAPTRAKRRTVQREKRAVGIGAVFLGFLGAAGSTMGAASVTLTVQARLLLSGIVQQQNNLLRAIEAQQHMLQLTVWGIKQLQARVLALERYLRDQQLMGIWGCSGKLICTTSVPWNVSWSNKSVDDIWNNMTWMEWEREIDNYTDYIYDLLEKSQTQQEKNEKELLELDKWASLWNWFDITNWLWYIRLFIMIVGGLIGLRIVFAVLSIVNRVRQGYSPLSFQTLLPASRGPDRPEGTEEEGGERDRDRSGPLVNGFLALFWVDLRNLCLFLYHLLRNLLLIVTRIVELLGRRGWEALKYWWNLLQYWSQELKNSAVSLLNATAIAVAEGTDRVIKIVQRACRAIRNIPTRIRQGLERALL</sequence>
<gene>
    <name evidence="1" type="primary">env</name>
</gene>
<dbReference type="EMBL" id="U39362">
    <property type="protein sequence ID" value="AAA81043.2"/>
    <property type="molecule type" value="Genomic_DNA"/>
</dbReference>
<dbReference type="PDB" id="4R4H">
    <property type="method" value="X-ray"/>
    <property type="resolution" value="4.28 A"/>
    <property type="chains" value="A=1-508"/>
</dbReference>
<dbReference type="PDB" id="5U3K">
    <property type="method" value="X-ray"/>
    <property type="resolution" value="2.64 A"/>
    <property type="chains" value="C/P=659-680"/>
</dbReference>
<dbReference type="PDB" id="5U3L">
    <property type="method" value="X-ray"/>
    <property type="resolution" value="2.17 A"/>
    <property type="chains" value="C/P=667-680"/>
</dbReference>
<dbReference type="PDB" id="5U3M">
    <property type="method" value="X-ray"/>
    <property type="resolution" value="2.42 A"/>
    <property type="chains" value="A=659-680"/>
</dbReference>
<dbReference type="PDB" id="5U3N">
    <property type="method" value="X-ray"/>
    <property type="resolution" value="2.00 A"/>
    <property type="chains" value="A=659-680"/>
</dbReference>
<dbReference type="PDB" id="5U3O">
    <property type="method" value="X-ray"/>
    <property type="resolution" value="1.76 A"/>
    <property type="chains" value="A=667-680"/>
</dbReference>
<dbReference type="PDB" id="6X58">
    <property type="method" value="X-ray"/>
    <property type="resolution" value="3.26 A"/>
    <property type="chains" value="E/F=666-679"/>
</dbReference>
<dbReference type="PDBsum" id="4R4H"/>
<dbReference type="PDBsum" id="5U3K"/>
<dbReference type="PDBsum" id="5U3L"/>
<dbReference type="PDBsum" id="5U3M"/>
<dbReference type="PDBsum" id="5U3N"/>
<dbReference type="PDBsum" id="5U3O"/>
<dbReference type="PDBsum" id="6X58"/>
<dbReference type="SMR" id="Q73372"/>
<dbReference type="GlyCosmos" id="Q73372">
    <property type="glycosylation" value="28 sites, No reported glycans"/>
</dbReference>
<dbReference type="EvolutionaryTrace" id="Q73372"/>
<dbReference type="Proteomes" id="UP000007691">
    <property type="component" value="Genome"/>
</dbReference>
<dbReference type="GO" id="GO:0044175">
    <property type="term" value="C:host cell endosome membrane"/>
    <property type="evidence" value="ECO:0007669"/>
    <property type="project" value="UniProtKB-SubCell"/>
</dbReference>
<dbReference type="GO" id="GO:0020002">
    <property type="term" value="C:host cell plasma membrane"/>
    <property type="evidence" value="ECO:0007669"/>
    <property type="project" value="UniProtKB-SubCell"/>
</dbReference>
<dbReference type="GO" id="GO:0016020">
    <property type="term" value="C:membrane"/>
    <property type="evidence" value="ECO:0007669"/>
    <property type="project" value="UniProtKB-UniRule"/>
</dbReference>
<dbReference type="GO" id="GO:0019031">
    <property type="term" value="C:viral envelope"/>
    <property type="evidence" value="ECO:0007669"/>
    <property type="project" value="UniProtKB-KW"/>
</dbReference>
<dbReference type="GO" id="GO:0055036">
    <property type="term" value="C:virion membrane"/>
    <property type="evidence" value="ECO:0007669"/>
    <property type="project" value="UniProtKB-SubCell"/>
</dbReference>
<dbReference type="GO" id="GO:0005198">
    <property type="term" value="F:structural molecule activity"/>
    <property type="evidence" value="ECO:0007669"/>
    <property type="project" value="UniProtKB-UniRule"/>
</dbReference>
<dbReference type="GO" id="GO:0075512">
    <property type="term" value="P:clathrin-dependent endocytosis of virus by host cell"/>
    <property type="evidence" value="ECO:0007669"/>
    <property type="project" value="UniProtKB-UniRule"/>
</dbReference>
<dbReference type="GO" id="GO:0039654">
    <property type="term" value="P:fusion of virus membrane with host endosome membrane"/>
    <property type="evidence" value="ECO:0007669"/>
    <property type="project" value="UniProtKB-UniRule"/>
</dbReference>
<dbReference type="GO" id="GO:0019064">
    <property type="term" value="P:fusion of virus membrane with host plasma membrane"/>
    <property type="evidence" value="ECO:0007669"/>
    <property type="project" value="UniProtKB-UniRule"/>
</dbReference>
<dbReference type="GO" id="GO:1903908">
    <property type="term" value="P:positive regulation of plasma membrane raft polarization"/>
    <property type="evidence" value="ECO:0007669"/>
    <property type="project" value="UniProtKB-UniRule"/>
</dbReference>
<dbReference type="GO" id="GO:1903911">
    <property type="term" value="P:positive regulation of receptor clustering"/>
    <property type="evidence" value="ECO:0007669"/>
    <property type="project" value="UniProtKB-UniRule"/>
</dbReference>
<dbReference type="GO" id="GO:0141117">
    <property type="term" value="P:symbiont-mediated suppression of host complement activation by recruitment of complement control protein"/>
    <property type="evidence" value="ECO:0000269"/>
    <property type="project" value="SigSci"/>
</dbReference>
<dbReference type="GO" id="GO:0019082">
    <property type="term" value="P:viral protein processing"/>
    <property type="evidence" value="ECO:0007669"/>
    <property type="project" value="UniProtKB-UniRule"/>
</dbReference>
<dbReference type="GO" id="GO:0019062">
    <property type="term" value="P:virion attachment to host cell"/>
    <property type="evidence" value="ECO:0007669"/>
    <property type="project" value="UniProtKB-UniRule"/>
</dbReference>
<dbReference type="CDD" id="cd09909">
    <property type="entry name" value="HIV-1-like_HR1-HR2"/>
    <property type="match status" value="1"/>
</dbReference>
<dbReference type="FunFam" id="1.10.287.210:FF:000001">
    <property type="entry name" value="Envelope glycoprotein gp160"/>
    <property type="match status" value="1"/>
</dbReference>
<dbReference type="FunFam" id="1.20.5.490:FF:000001">
    <property type="entry name" value="Envelope glycoprotein gp160"/>
    <property type="match status" value="1"/>
</dbReference>
<dbReference type="FunFam" id="2.170.40.20:FF:000001">
    <property type="entry name" value="Envelope glycoprotein gp160"/>
    <property type="match status" value="1"/>
</dbReference>
<dbReference type="FunFam" id="2.170.40.20:FF:000003">
    <property type="entry name" value="Envelope glycoprotein gp160"/>
    <property type="match status" value="1"/>
</dbReference>
<dbReference type="Gene3D" id="1.10.287.210">
    <property type="match status" value="1"/>
</dbReference>
<dbReference type="Gene3D" id="2.170.40.20">
    <property type="entry name" value="Human immunodeficiency virus 1, Gp160, envelope glycoprotein"/>
    <property type="match status" value="2"/>
</dbReference>
<dbReference type="Gene3D" id="1.20.5.490">
    <property type="entry name" value="Single helix bin"/>
    <property type="match status" value="1"/>
</dbReference>
<dbReference type="HAMAP" id="MF_04083">
    <property type="entry name" value="HIV_ENV"/>
    <property type="match status" value="1"/>
</dbReference>
<dbReference type="InterPro" id="IPR036377">
    <property type="entry name" value="Gp120_core_sf"/>
</dbReference>
<dbReference type="InterPro" id="IPR037527">
    <property type="entry name" value="Gp160"/>
</dbReference>
<dbReference type="InterPro" id="IPR000328">
    <property type="entry name" value="GP41-like"/>
</dbReference>
<dbReference type="InterPro" id="IPR000777">
    <property type="entry name" value="HIV1_Gp120"/>
</dbReference>
<dbReference type="Pfam" id="PF00516">
    <property type="entry name" value="GP120"/>
    <property type="match status" value="1"/>
</dbReference>
<dbReference type="Pfam" id="PF00517">
    <property type="entry name" value="GP41"/>
    <property type="match status" value="1"/>
</dbReference>
<dbReference type="SUPFAM" id="SSF56502">
    <property type="entry name" value="gp120 core"/>
    <property type="match status" value="2"/>
</dbReference>
<dbReference type="SUPFAM" id="SSF58069">
    <property type="entry name" value="Virus ectodomain"/>
    <property type="match status" value="1"/>
</dbReference>
<comment type="function">
    <molecule>Envelope glycoprotein gp160</molecule>
    <text evidence="1">Oligomerizes in the host endoplasmic reticulum into predominantly trimers. In a second time, gp160 transits in the host Golgi, where glycosylation is completed. The precursor is then proteolytically cleaved in the trans-Golgi and thereby activated by cellular furin or furin-like proteases to produce gp120 and gp41.</text>
</comment>
<comment type="function">
    <molecule>Surface protein gp120</molecule>
    <text evidence="1">Attaches the virus to the host lymphoid cell by binding to the primary receptor CD4. This interaction induces a structural rearrangement creating a high affinity binding site for a chemokine coreceptor like CXCR4 and/or CCR5. Acts as a ligand for CD209/DC-SIGN and CLEC4M/DC-SIGNR, which are respectively found on dendritic cells (DCs), and on endothelial cells of liver sinusoids and lymph node sinuses. These interactions allow capture of viral particles at mucosal surfaces by these cells and subsequent transmission to permissive cells. HIV subverts the migration properties of dendritic cells to gain access to CD4+ T-cells in lymph nodes. Virus transmission to permissive T-cells occurs either in trans (without DCs infection, through viral capture and transmission), or in cis (following DCs productive infection, through the usual CD4-gp120 interaction), thereby inducing a robust infection. In trans infection, bound virions remain infectious over days and it is proposed that they are not degraded, but protected in non-lysosomal acidic organelles within the DCs close to the cell membrane thus contributing to the viral infectious potential during DCs' migration from the periphery to the lymphoid tissues. On arrival at lymphoid tissues, intact virions recycle back to DCs' cell surface allowing virus transmission to CD4+ T-cells.</text>
</comment>
<comment type="function">
    <molecule>Transmembrane protein gp41</molecule>
    <text evidence="1">Acts as a class I viral fusion protein. Under the current model, the protein has at least 3 conformational states: pre-fusion native state, pre-hairpin intermediate state, and post-fusion hairpin state. During fusion of viral and target intracellular membranes, the coiled coil regions (heptad repeats) assume a trimer-of-hairpins structure, positioning the fusion peptide in close proximity to the C-terminal region of the ectodomain. The formation of this structure appears to drive apposition and subsequent fusion of viral and target cell membranes. Complete fusion occurs in host cell endosomes and is dynamin-dependent, however some lipid transfer might occur at the plasma membrane. The virus undergoes clathrin-dependent internalization long before endosomal fusion, thus minimizing the surface exposure of conserved viral epitopes during fusion and reducing the efficacy of inhibitors targeting these epitopes. Membranes fusion leads to delivery of the nucleocapsid into the cytoplasm.</text>
</comment>
<comment type="subunit">
    <molecule>Surface protein gp120</molecule>
    <text evidence="1">The mature envelope protein (Env) consists of a homotrimer of non-covalently associated gp120-gp41 heterodimers. The resulting complex protrudes from the virus surface as a spike. There seems to be as few as 10 spikes on the average virion. Interacts with host CD4, CCR5 and CXCR4. Gp120 also interacts with the C-type lectins CD209/DC-SIGN and CLEC4M/DC-SIGNR (collectively referred to as DC-SIGN(R)). Gp120 and gp41 interact with GalCer. Gp120 interacts with host ITGA4/ITGB7 complex; on CD4+ T-cells, this interaction results in rapid activation of integrin ITGAL/LFA-1, which facilitates efficient cell-to-cell spreading of HIV-1. Gp120 interacts with cell-associated heparan sulfate; this interaction increases virus infectivity on permissive cells and may be involved in infection of CD4- cells.</text>
</comment>
<comment type="subunit">
    <molecule>Transmembrane protein gp41</molecule>
    <text evidence="1">The mature envelope protein (Env) consists of a homotrimer of non-covalently associated gp120-gp41 heterodimers. The resulting complex protrudes from the virus surface as a spike. There seems to be as few as 10 spikes on the average virion.</text>
</comment>
<comment type="subcellular location">
    <molecule>Surface protein gp120</molecule>
    <subcellularLocation>
        <location evidence="1">Virion membrane</location>
        <topology evidence="1">Peripheral membrane protein</topology>
    </subcellularLocation>
    <subcellularLocation>
        <location evidence="1">Host cell membrane</location>
        <topology evidence="1">Peripheral membrane protein</topology>
    </subcellularLocation>
    <subcellularLocation>
        <location evidence="1">Host endosome membrane</location>
        <topology evidence="1">Single-pass type I membrane protein</topology>
    </subcellularLocation>
    <text evidence="1">The surface protein is not anchored to the viral envelope, but associates with the extravirion surface through its binding to TM. It is probably concentrated at the site of budding and incorporated into the virions possibly by contacts between the cytoplasmic tail of Env and the N-terminus of Gag.</text>
</comment>
<comment type="subcellular location">
    <molecule>Transmembrane protein gp41</molecule>
    <subcellularLocation>
        <location evidence="1">Virion membrane</location>
        <topology evidence="1">Single-pass type I membrane protein</topology>
    </subcellularLocation>
    <subcellularLocation>
        <location evidence="1">Host cell membrane</location>
        <topology evidence="1">Single-pass type I membrane protein</topology>
    </subcellularLocation>
    <subcellularLocation>
        <location evidence="1">Host endosome membrane</location>
        <topology evidence="1">Single-pass type I membrane protein</topology>
    </subcellularLocation>
    <text evidence="1">It is probably concentrated at the site of budding and incorporated into the virions possibly by contacts between the cytoplasmic tail of Env and the N-terminus of Gag.</text>
</comment>
<comment type="domain">
    <text evidence="1">Some of the most genetically diverse regions of the viral genome are present in Env. They are called variable regions 1 through 5 (V1 through V5). Coreceptor usage of gp120 is determined mainly by the primary structure of the third variable region (V3) in the outer domain of gp120. The sequence of V3 determines which coreceptor, CCR5 and/or CXCR4 (corresponding to R5/macrophage, X4/T cell and R5X4/T cell and macrophage tropism), is used to trigger the fusion potential of the Env complex, and hence which cells the virus can infect. Binding to CCR5 involves a region adjacent in addition to V3.</text>
</comment>
<comment type="domain">
    <text evidence="1">The membrane proximal external region (MPER) present in gp41 is a tryptophan-rich region recognized by the antibodies 2F5, Z13, and 4E10. MPER seems to play a role in fusion.</text>
</comment>
<comment type="domain">
    <text evidence="1">The 17 amino acids long immunosuppressive region is present in many retroviral envelope proteins. Synthetic peptides derived from this relatively conserved sequence inhibit immune function in vitro and in vivo.</text>
</comment>
<comment type="domain">
    <text evidence="1">The YXXL motif is involved in determining the exact site of viral release at the surface of infected mononuclear cells and promotes endocytosis. YXXL and di-leucine endocytosis motifs interact directly or indirectly with the clathrin adapter complexes, opperate independently, and their activities are not additive.</text>
</comment>
<comment type="domain">
    <text evidence="1">The CD4-binding region is targeted by the antibody b12.</text>
</comment>
<comment type="PTM">
    <text evidence="1">Highly glycosylated by host. The high number of glycan on the protein is reffered to as 'glycan shield' because it contributes to hide protein sequence from adaptive immune system.</text>
</comment>
<comment type="PTM">
    <text evidence="1">Palmitoylation of the transmembrane protein and of Env polyprotein (prior to its proteolytic cleavage) is essential for their association with host cell membrane lipid rafts. Palmitoylation is therefore required for envelope trafficking to classical lipid rafts, but not for viral replication.</text>
</comment>
<comment type="PTM">
    <text evidence="1">Specific enzymatic cleavages in vivo yield mature proteins. Envelope glycoproteins are synthesized as an inactive precursor that is heavily N-glycosylated and processed likely by host cell furin in the Golgi to yield the mature SU and TM proteins. The cleavage site between SU and TM requires the minimal sequence [KR]-X-[KR]-R. About 2 of the 9 disulfide bonds of gp41 are reduced by P4HB/PDI, following binding to CD4 receptor.</text>
</comment>
<comment type="miscellaneous">
    <text evidence="1">Inhibitors targeting HIV-1 viral envelope proteins are used as antiretroviral drugs. Attachment of virions to the cell surface via non-specific interactions and CD4 binding can be blocked by inhibitors that include cyanovirin-N, cyclotriazadisulfonamide analogs, PRO 2000, TNX 355 and PRO 542. In addition, BMS 806 can block CD4-induced conformational changes. Env interactions with the coreceptor molecules can be targeted by CCR5 antagonists including SCH-D, maraviroc (UK 427857) and aplaviroc (GW 873140), and the CXCR4 antagonist AMD 070. Fusion of viral and cellular membranes can be inhibited by peptides such as enfuvirtide and tifuvirtide (T 1249). Resistance to inhibitors associated with mutations in Env are observed. Most of the time, single mutations confer only a modest reduction in drug susceptibility. Combination of several mutations is usually required to develop a high-level drug resistance.</text>
</comment>
<comment type="miscellaneous">
    <text evidence="1">HIV-1 lineages are divided in three main groups, M (for Major), O (for Outlier), and N (for New, or Non-M, Non-O). The vast majority of strains found worldwide belong to the group M. Group O seems to be endemic to and largely confined to Cameroon and neighboring countries in West Central Africa, where these viruses represent a small minority of HIV-1 strains. The group N is represented by a limited number of isolates from Cameroonian persons. The group M is further subdivided in 9 clades or subtypes (A to D, F to H, J and K).</text>
</comment>
<comment type="similarity">
    <text evidence="1">Belongs to the HIV-1 env protein family.</text>
</comment>
<comment type="online information" name="hivdb">
    <link uri="https://hivdb.stanford.edu"/>
    <text>HIV drug resistance database</text>
</comment>
<comment type="online information" name="HIV drug resistance mutations">
    <link uri="https://www.iasusa.org/hiv-drug-resistance/hiv-drug-resistance-mutations/"/>
</comment>
<feature type="signal peptide" evidence="1">
    <location>
        <begin position="1"/>
        <end position="31"/>
    </location>
</feature>
<feature type="chain" id="PRO_0000441237" description="Envelope glycoprotein gp160" evidence="1">
    <location>
        <begin position="32"/>
        <end position="853"/>
    </location>
</feature>
<feature type="chain" id="PRO_0000441238" description="Surface protein gp120" evidence="1">
    <location>
        <begin position="32"/>
        <end position="508"/>
    </location>
</feature>
<feature type="chain" id="PRO_0000250966" description="Transmembrane protein gp41" evidence="1">
    <location>
        <begin position="509"/>
        <end position="853"/>
    </location>
</feature>
<feature type="topological domain" description="Extracellular" evidence="1">
    <location>
        <begin position="32"/>
        <end position="681"/>
    </location>
</feature>
<feature type="transmembrane region" description="Helical" evidence="1">
    <location>
        <begin position="682"/>
        <end position="702"/>
    </location>
</feature>
<feature type="topological domain" description="Cytoplasmic" evidence="1">
    <location>
        <begin position="703"/>
        <end position="853"/>
    </location>
</feature>
<feature type="region of interest" description="V1" evidence="1">
    <location>
        <begin position="130"/>
        <end position="157"/>
    </location>
</feature>
<feature type="region of interest" description="V2" evidence="1">
    <location>
        <begin position="158"/>
        <end position="198"/>
    </location>
</feature>
<feature type="region of interest" description="V3" evidence="1">
    <location>
        <begin position="298"/>
        <end position="331"/>
    </location>
</feature>
<feature type="region of interest" description="CD4-binding loop" evidence="1">
    <location>
        <begin position="364"/>
        <end position="374"/>
    </location>
</feature>
<feature type="region of interest" description="V4" evidence="1">
    <location>
        <begin position="385"/>
        <end position="414"/>
    </location>
</feature>
<feature type="region of interest" description="V5" evidence="1">
    <location>
        <begin position="459"/>
        <end position="468"/>
    </location>
</feature>
<feature type="region of interest" description="Fusion peptide" evidence="1">
    <location>
        <begin position="509"/>
        <end position="529"/>
    </location>
</feature>
<feature type="region of interest" description="Immunosuppression" evidence="1">
    <location>
        <begin position="571"/>
        <end position="589"/>
    </location>
</feature>
<feature type="region of interest" description="MPER; binding to GalCer" evidence="1">
    <location>
        <begin position="659"/>
        <end position="680"/>
    </location>
</feature>
<feature type="region of interest" description="Disordered" evidence="2">
    <location>
        <begin position="718"/>
        <end position="740"/>
    </location>
</feature>
<feature type="coiled-coil region" evidence="1">
    <location>
        <begin position="630"/>
        <end position="664"/>
    </location>
</feature>
<feature type="short sequence motif" description="YXXL motif; contains endocytosis signal" evidence="1">
    <location>
        <begin position="709"/>
        <end position="712"/>
    </location>
</feature>
<feature type="short sequence motif" description="Di-leucine internalization motif" evidence="1">
    <location>
        <begin position="852"/>
        <end position="853"/>
    </location>
</feature>
<feature type="site" description="Cleavage; by host furin" evidence="1">
    <location>
        <begin position="508"/>
        <end position="509"/>
    </location>
</feature>
<feature type="lipid moiety-binding region" description="S-palmitoyl cysteine; by host" evidence="1">
    <location>
        <position position="761"/>
    </location>
</feature>
<feature type="lipid moiety-binding region" description="S-palmitoyl cysteine; by host" evidence="1">
    <location>
        <position position="834"/>
    </location>
</feature>
<feature type="glycosylation site" description="N-linked (GlcNAc...) asparagine; by host" evidence="1">
    <location>
        <position position="87"/>
    </location>
</feature>
<feature type="glycosylation site" description="N-linked (GlcNAc...) asparagine; by host" evidence="1">
    <location>
        <position position="129"/>
    </location>
</feature>
<feature type="glycosylation site" description="N-linked (GlcNAc...) asparagine; by host" evidence="1">
    <location>
        <position position="134"/>
    </location>
</feature>
<feature type="glycosylation site" description="N-linked (GlcNAc...) asparagine; by host" evidence="1">
    <location>
        <position position="138"/>
    </location>
</feature>
<feature type="glycosylation site" description="N-linked (GlcNAc...) asparagine; by host" evidence="1">
    <location>
        <position position="157"/>
    </location>
</feature>
<feature type="glycosylation site" description="N-linked (GlcNAc...) asparagine; by host" evidence="1">
    <location>
        <position position="189"/>
    </location>
</feature>
<feature type="glycosylation site" description="N-linked (GlcNAc...) asparagine; by host" evidence="1">
    <location>
        <position position="199"/>
    </location>
</feature>
<feature type="glycosylation site" description="N-linked (GlcNAc...) asparagine; by host" evidence="1">
    <location>
        <position position="232"/>
    </location>
</feature>
<feature type="glycosylation site" description="N-linked (GlcNAc...) asparagine; by host" evidence="1">
    <location>
        <position position="236"/>
    </location>
</feature>
<feature type="glycosylation site" description="N-linked (GlcNAc...) asparagine; by host" evidence="1">
    <location>
        <position position="243"/>
    </location>
</feature>
<feature type="glycosylation site" description="N-linked (GlcNAc...) asparagine; by host" evidence="1">
    <location>
        <position position="264"/>
    </location>
</feature>
<feature type="glycosylation site" description="N-linked (GlcNAc...) asparagine; by host" evidence="1">
    <location>
        <position position="278"/>
    </location>
</feature>
<feature type="glycosylation site" description="N-linked (GlcNAc...) asparagine; by host" evidence="1">
    <location>
        <position position="291"/>
    </location>
</feature>
<feature type="glycosylation site" description="N-linked (GlcNAc...) asparagine; by host" evidence="1">
    <location>
        <position position="297"/>
    </location>
</feature>
<feature type="glycosylation site" description="N-linked (GlcNAc...) asparagine; by host" evidence="1">
    <location>
        <position position="303"/>
    </location>
</feature>
<feature type="glycosylation site" description="N-linked (GlcNAc...) asparagine; by host" evidence="1">
    <location>
        <position position="333"/>
    </location>
</feature>
<feature type="glycosylation site" description="N-linked (GlcNAc...) asparagine; by host" evidence="1">
    <location>
        <position position="340"/>
    </location>
</feature>
<feature type="glycosylation site" description="N-linked (GlcNAc...) asparagine; by host" evidence="1">
    <location>
        <position position="356"/>
    </location>
</feature>
<feature type="glycosylation site" description="N-linked (GlcNAc...) asparagine; by host" evidence="1">
    <location>
        <position position="362"/>
    </location>
</feature>
<feature type="glycosylation site" description="N-linked (GlcNAc...) asparagine; by host" evidence="1">
    <location>
        <position position="392"/>
    </location>
</feature>
<feature type="glycosylation site" description="N-linked (GlcNAc...) asparagine; by host" evidence="1">
    <location>
        <position position="396"/>
    </location>
</feature>
<feature type="glycosylation site" description="N-linked (GlcNAc...) asparagine; by host" evidence="1">
    <location>
        <position position="402"/>
    </location>
</feature>
<feature type="glycosylation site" description="N-linked (GlcNAc...) asparagine; by host" evidence="1">
    <location>
        <position position="444"/>
    </location>
</feature>
<feature type="glycosylation site" description="N-linked (GlcNAc...) asparagine; by host" evidence="1">
    <location>
        <position position="456"/>
    </location>
</feature>
<feature type="glycosylation site" description="N-linked (GlcNAc...) asparagine; by host" evidence="1">
    <location>
        <position position="608"/>
    </location>
</feature>
<feature type="glycosylation site" description="N-linked (GlcNAc...) asparagine; by host" evidence="1">
    <location>
        <position position="613"/>
    </location>
</feature>
<feature type="glycosylation site" description="N-linked (GlcNAc...) asparagine; by host" evidence="1">
    <location>
        <position position="622"/>
    </location>
</feature>
<feature type="glycosylation site" description="N-linked (GlcNAc...) asparagine; by host" evidence="1">
    <location>
        <position position="634"/>
    </location>
</feature>
<feature type="disulfide bond" evidence="1">
    <location>
        <begin position="53"/>
        <end position="73"/>
    </location>
</feature>
<feature type="disulfide bond" evidence="1">
    <location>
        <begin position="118"/>
        <end position="207"/>
    </location>
</feature>
<feature type="disulfide bond" evidence="1">
    <location>
        <begin position="125"/>
        <end position="198"/>
    </location>
</feature>
<feature type="disulfide bond" evidence="1">
    <location>
        <begin position="130"/>
        <end position="158"/>
    </location>
</feature>
<feature type="disulfide bond" evidence="1">
    <location>
        <begin position="220"/>
        <end position="249"/>
    </location>
</feature>
<feature type="disulfide bond" evidence="1">
    <location>
        <begin position="230"/>
        <end position="241"/>
    </location>
</feature>
<feature type="disulfide bond" evidence="1">
    <location>
        <begin position="298"/>
        <end position="332"/>
    </location>
</feature>
<feature type="disulfide bond" evidence="1">
    <location>
        <begin position="378"/>
        <end position="441"/>
    </location>
</feature>
<feature type="disulfide bond" evidence="1">
    <location>
        <begin position="385"/>
        <end position="414"/>
    </location>
</feature>
<feature type="disulfide bond" evidence="1">
    <location>
        <begin position="595"/>
        <end position="601"/>
    </location>
</feature>
<feature type="helix" evidence="3">
    <location>
        <begin position="669"/>
        <end position="680"/>
    </location>
</feature>
<organism>
    <name type="scientific">Human immunodeficiency virus type 1 group M subtype B (strain 89.6)</name>
    <name type="common">HIV-1</name>
    <dbReference type="NCBI Taxonomy" id="401671"/>
    <lineage>
        <taxon>Viruses</taxon>
        <taxon>Riboviria</taxon>
        <taxon>Pararnavirae</taxon>
        <taxon>Artverviricota</taxon>
        <taxon>Revtraviricetes</taxon>
        <taxon>Ortervirales</taxon>
        <taxon>Retroviridae</taxon>
        <taxon>Orthoretrovirinae</taxon>
        <taxon>Lentivirus</taxon>
        <taxon>Human immunodeficiency virus type 1</taxon>
    </lineage>
</organism>
<name>ENV_HV1B9</name>
<organismHost>
    <name type="scientific">Homo sapiens</name>
    <name type="common">Human</name>
    <dbReference type="NCBI Taxonomy" id="9606"/>
</organismHost>